<sequence length="130" mass="14516">MKLFTGLILCSLVLGVHSQWMSFFGEAYEGAKDMWRAYSDMREANYKGADKYFHARGNYDAAQRGPGGAWAAKVISDARENIQRFTDPLFKGTTSGQGQEDSRADQAANEWGRSGKDPNHFRPAGLPDKY</sequence>
<reference key="1">
    <citation type="submission" date="2005-11" db="EMBL/GenBank/DDBJ databases">
        <authorList>
            <consortium name="NIH - Mammalian Gene Collection (MGC) project"/>
        </authorList>
    </citation>
    <scope>NUCLEOTIDE SEQUENCE [LARGE SCALE MRNA]</scope>
    <source>
        <strain>Crossbred X Angus</strain>
        <tissue>Liver</tissue>
    </source>
</reference>
<reference key="2">
    <citation type="journal article" date="1992" name="Scand. J. Immunol.">
        <title>The complete amino acid sequence of bovine serum amyloid protein A (SAA) and of subspecies of the tissue-deposited amyloid fibril protein A.</title>
        <authorList>
            <person name="Rossevatin K."/>
            <person name="Andresen P.K."/>
            <person name="Sletten K."/>
            <person name="Husebekk A."/>
            <person name="Husby G."/>
            <person name="Nordstoga K."/>
            <person name="Johnson K.H."/>
            <person name="Westermark G.T."/>
            <person name="Westermark P."/>
        </authorList>
    </citation>
    <scope>PROTEIN SEQUENCE OF 19-130</scope>
    <source>
        <tissue>Plasma</tissue>
    </source>
</reference>
<reference key="3">
    <citation type="journal article" date="1989" name="J. Lab. Clin. Med.">
        <title>A unique insertion in the primary structure of bovine amyloid AA protein.</title>
        <authorList>
            <person name="Benson M.D."/>
            <person name="Dibartola S.P."/>
            <person name="Dwulet F.E."/>
        </authorList>
    </citation>
    <scope>PROTEIN SEQUENCE OF 19-108</scope>
</reference>
<reference key="4">
    <citation type="journal article" date="1988" name="Scand. J. Immunol.">
        <title>Characterization of bovine amyloid proteins SAA and AA.</title>
        <authorList>
            <person name="Husebekk A."/>
            <person name="Husby G."/>
            <person name="Sletten K."/>
            <person name="Skogen B."/>
            <person name="Nordstoga K."/>
        </authorList>
    </citation>
    <scope>PROTEIN SEQUENCE OF 22-34</scope>
</reference>
<reference key="5">
    <citation type="journal article" date="1986" name="Comp. Biochem. Physiol.">
        <title>Bovine amyloid protein AA: isolation and amino acid sequence analysis.</title>
        <authorList>
            <person name="Westermark P."/>
            <person name="Johnson K.H."/>
            <person name="Westermark G.T."/>
            <person name="Sletten K."/>
            <person name="Hayden D.W."/>
        </authorList>
    </citation>
    <scope>PROTEIN SEQUENCE OF 21-66</scope>
</reference>
<accession>P35541</accession>
<accession>Q32L36</accession>
<evidence type="ECO:0000250" key="1">
    <source>
        <dbReference type="UniProtKB" id="P42819"/>
    </source>
</evidence>
<evidence type="ECO:0000256" key="2">
    <source>
        <dbReference type="SAM" id="MobiDB-lite"/>
    </source>
</evidence>
<evidence type="ECO:0000269" key="3">
    <source>
    </source>
</evidence>
<evidence type="ECO:0000269" key="4">
    <source>
    </source>
</evidence>
<evidence type="ECO:0000305" key="5"/>
<gene>
    <name type="primary">SAA1</name>
    <name type="synonym">SAA</name>
</gene>
<name>SAA_BOVIN</name>
<protein>
    <recommendedName>
        <fullName>Serum amyloid A protein</fullName>
        <shortName>SAA</shortName>
    </recommendedName>
    <component>
        <recommendedName>
            <fullName>Amyloid protein A</fullName>
        </recommendedName>
        <alternativeName>
            <fullName>Amyloid fibril protein AA</fullName>
        </alternativeName>
    </component>
</protein>
<keyword id="KW-0011">Acute phase</keyword>
<keyword id="KW-0034">Amyloid</keyword>
<keyword id="KW-0903">Direct protein sequencing</keyword>
<keyword id="KW-0345">HDL</keyword>
<keyword id="KW-0873">Pyrrolidone carboxylic acid</keyword>
<keyword id="KW-1185">Reference proteome</keyword>
<keyword id="KW-0964">Secreted</keyword>
<keyword id="KW-0732">Signal</keyword>
<dbReference type="EMBL" id="BC109787">
    <property type="protein sequence ID" value="AAI09788.1"/>
    <property type="molecule type" value="mRNA"/>
</dbReference>
<dbReference type="PIR" id="A60952">
    <property type="entry name" value="A60952"/>
</dbReference>
<dbReference type="RefSeq" id="NP_001068728.1">
    <property type="nucleotide sequence ID" value="NM_001075260.2"/>
</dbReference>
<dbReference type="SMR" id="P35541"/>
<dbReference type="FunCoup" id="P35541">
    <property type="interactions" value="30"/>
</dbReference>
<dbReference type="STRING" id="9913.ENSBTAP00000030310"/>
<dbReference type="PaxDb" id="9913-ENSBTAP00000030310"/>
<dbReference type="GeneID" id="506412"/>
<dbReference type="KEGG" id="bta:506412"/>
<dbReference type="CTD" id="6289"/>
<dbReference type="eggNOG" id="ENOG502S4PB">
    <property type="taxonomic scope" value="Eukaryota"/>
</dbReference>
<dbReference type="HOGENOM" id="CLU_129936_0_0_1"/>
<dbReference type="InParanoid" id="P35541"/>
<dbReference type="OrthoDB" id="6112826at2759"/>
<dbReference type="TreeFam" id="TF332544"/>
<dbReference type="Proteomes" id="UP000009136">
    <property type="component" value="Unplaced"/>
</dbReference>
<dbReference type="GO" id="GO:0034364">
    <property type="term" value="C:high-density lipoprotein particle"/>
    <property type="evidence" value="ECO:0007669"/>
    <property type="project" value="UniProtKB-KW"/>
</dbReference>
<dbReference type="GO" id="GO:0006953">
    <property type="term" value="P:acute-phase response"/>
    <property type="evidence" value="ECO:0007669"/>
    <property type="project" value="UniProtKB-KW"/>
</dbReference>
<dbReference type="FunFam" id="1.10.132.110:FF:000001">
    <property type="entry name" value="Serum amyloid A protein"/>
    <property type="match status" value="1"/>
</dbReference>
<dbReference type="Gene3D" id="1.10.132.110">
    <property type="entry name" value="Serum amyloid A protein"/>
    <property type="match status" value="1"/>
</dbReference>
<dbReference type="InterPro" id="IPR000096">
    <property type="entry name" value="Serum_amyloid_A"/>
</dbReference>
<dbReference type="InterPro" id="IPR052464">
    <property type="entry name" value="Synovial_Prolif_Regulator"/>
</dbReference>
<dbReference type="PANTHER" id="PTHR23424">
    <property type="entry name" value="SERUM AMYLOID A"/>
    <property type="match status" value="1"/>
</dbReference>
<dbReference type="PANTHER" id="PTHR23424:SF30">
    <property type="entry name" value="SERUM AMYLOID A-2 PROTEIN"/>
    <property type="match status" value="1"/>
</dbReference>
<dbReference type="Pfam" id="PF00277">
    <property type="entry name" value="SAA"/>
    <property type="match status" value="1"/>
</dbReference>
<dbReference type="PIRSF" id="PIRSF002472">
    <property type="entry name" value="Serum_amyloid_A"/>
    <property type="match status" value="1"/>
</dbReference>
<dbReference type="PRINTS" id="PR00306">
    <property type="entry name" value="SERUMAMYLOID"/>
</dbReference>
<dbReference type="SMART" id="SM00197">
    <property type="entry name" value="SAA"/>
    <property type="match status" value="1"/>
</dbReference>
<dbReference type="PROSITE" id="PS00992">
    <property type="entry name" value="SAA"/>
    <property type="match status" value="1"/>
</dbReference>
<organism>
    <name type="scientific">Bos taurus</name>
    <name type="common">Bovine</name>
    <dbReference type="NCBI Taxonomy" id="9913"/>
    <lineage>
        <taxon>Eukaryota</taxon>
        <taxon>Metazoa</taxon>
        <taxon>Chordata</taxon>
        <taxon>Craniata</taxon>
        <taxon>Vertebrata</taxon>
        <taxon>Euteleostomi</taxon>
        <taxon>Mammalia</taxon>
        <taxon>Eutheria</taxon>
        <taxon>Laurasiatheria</taxon>
        <taxon>Artiodactyla</taxon>
        <taxon>Ruminantia</taxon>
        <taxon>Pecora</taxon>
        <taxon>Bovidae</taxon>
        <taxon>Bovinae</taxon>
        <taxon>Bos</taxon>
    </lineage>
</organism>
<comment type="function">
    <text>Major acute phase reactant. Apolipoprotein of the HDL complex.</text>
</comment>
<comment type="subcellular location">
    <subcellularLocation>
        <location>Secreted</location>
    </subcellularLocation>
</comment>
<comment type="tissue specificity">
    <text>Expressed by the liver; secreted in plasma.</text>
</comment>
<comment type="induction">
    <text>Upon cytokine stimulation.</text>
</comment>
<comment type="PTM">
    <text>This protein is the precursor of amyloid protein A, which is formed by the removal of residues from the C-terminal end.</text>
</comment>
<comment type="disease">
    <text>Reactive, secondary amyloidosis is characterized by the extracellular accumulation in various tissues of the SAA protein. These deposits are highly insoluble and resistant to proteolysis; they disrupt tissue structure and compromise function.</text>
</comment>
<comment type="similarity">
    <text evidence="5">Belongs to the SAA family.</text>
</comment>
<feature type="signal peptide" evidence="3 4">
    <location>
        <begin position="1"/>
        <end position="18"/>
    </location>
</feature>
<feature type="chain" id="PRO_0000031568" description="Serum amyloid A protein">
    <location>
        <begin position="19"/>
        <end position="130"/>
    </location>
</feature>
<feature type="chain" id="PRO_0000031569" description="Amyloid protein A">
    <location>
        <begin position="19"/>
        <end position="108"/>
    </location>
</feature>
<feature type="region of interest" description="Disordered" evidence="2">
    <location>
        <begin position="86"/>
        <end position="130"/>
    </location>
</feature>
<feature type="modified residue" description="Pyrrolidone carboxylic acid" evidence="1">
    <location>
        <position position="19"/>
    </location>
</feature>
<proteinExistence type="evidence at protein level"/>